<name>TYW1_XENLA</name>
<feature type="chain" id="PRO_0000281831" description="S-adenosyl-L-methionine-dependent tRNA 4-demethylwyosine synthase TYW1">
    <location>
        <begin position="1"/>
        <end position="735"/>
    </location>
</feature>
<feature type="domain" description="Flavodoxin-like" evidence="3">
    <location>
        <begin position="83"/>
        <end position="241"/>
    </location>
</feature>
<feature type="domain" description="Radical SAM core" evidence="4">
    <location>
        <begin position="403"/>
        <end position="649"/>
    </location>
</feature>
<feature type="region of interest" description="Disordered" evidence="5">
    <location>
        <begin position="253"/>
        <end position="356"/>
    </location>
</feature>
<feature type="compositionally biased region" description="Basic residues" evidence="5">
    <location>
        <begin position="258"/>
        <end position="269"/>
    </location>
</feature>
<feature type="compositionally biased region" description="Acidic residues" evidence="5">
    <location>
        <begin position="289"/>
        <end position="306"/>
    </location>
</feature>
<feature type="compositionally biased region" description="Basic and acidic residues" evidence="5">
    <location>
        <begin position="345"/>
        <end position="356"/>
    </location>
</feature>
<feature type="binding site" evidence="3">
    <location>
        <begin position="89"/>
        <end position="93"/>
    </location>
    <ligand>
        <name>FMN</name>
        <dbReference type="ChEBI" id="CHEBI:58210"/>
    </ligand>
</feature>
<feature type="binding site" evidence="3">
    <location>
        <begin position="180"/>
        <end position="212"/>
    </location>
    <ligand>
        <name>FMN</name>
        <dbReference type="ChEBI" id="CHEBI:58210"/>
    </ligand>
</feature>
<feature type="binding site" evidence="2">
    <location>
        <position position="419"/>
    </location>
    <ligand>
        <name>[4Fe-4S] cluster</name>
        <dbReference type="ChEBI" id="CHEBI:49883"/>
        <note>4Fe-4S-S-AdoMet</note>
    </ligand>
</feature>
<feature type="binding site" evidence="2">
    <location>
        <position position="423"/>
    </location>
    <ligand>
        <name>[4Fe-4S] cluster</name>
        <dbReference type="ChEBI" id="CHEBI:49883"/>
        <note>4Fe-4S-S-AdoMet</note>
    </ligand>
</feature>
<feature type="binding site" evidence="2">
    <location>
        <position position="426"/>
    </location>
    <ligand>
        <name>[4Fe-4S] cluster</name>
        <dbReference type="ChEBI" id="CHEBI:49883"/>
        <note>4Fe-4S-S-AdoMet</note>
    </ligand>
</feature>
<sequence>MDKSTDAWDFAYTHLMFLWLNRFYIYSCAAIGITVWVCSHFIMARKKHQNETVCNGSLLLKTKALKSDSLTSNKEQKVYVAGVKIFYGSQTGTSKGFAHLLAEEVTLLGLPVELINMKEYDPDDNLVEETTSKNICVFLVATYTDGKPPESAEWFCKWLEEASNDFRFGKTYLKGMRYAVFGLGNSVYSTHYNTVGKNIDKWLWMLSANRVMTRAEGDCNVVKSKHGSIESDFEAWKRKFLNRLKALLSGEKKPCSGKCKKGKCKSKKKSSIESVEEEEEEEEKHSEHEDTEDDTFETSSDSEPEEHGEPGSGLIDVEDLGKAMSNMKKSKREHDSNTELGKSLQGDEAKEKEEPREMITPALQEALTKQGYRLIGSHSGVKLCRWTKSMLRGRGGCYKHTFYGIESHRCMETTPSLACANKCVFCWRHHTNPVGTEWRWKMDQPEMILEEAILNHQNMIKQFKGVPGVKPERFEEGLAVKHCALSLVGEPIMYPEINTFLRLLHNQHISSFLVTNAQFPEEIRSLEPVTQLYVSVDASTKDSLKKIDRPLFKDFWQRFIDSLKALAEKQQRTVYRLTLVKAWNVDELKAYADLVALGLPDFIEVKGVTYCGESSASNLTMANVPWHEEVIRFVEELVDLLPDYEVACEHEHSNCMLIAHKKFKINGEWCTWIDYERFQELIQAFGESKGSRTFTALDYVAKTPEWALFGSRERGFDPLDKRFQRKNKTKDISGC</sequence>
<protein>
    <recommendedName>
        <fullName>S-adenosyl-L-methionine-dependent tRNA 4-demethylwyosine synthase TYW1</fullName>
        <ecNumber>4.1.3.44</ecNumber>
    </recommendedName>
    <alternativeName>
        <fullName>Radical S-adenosyl methionine and flavodoxin domain-containing protein 1</fullName>
    </alternativeName>
    <alternativeName>
        <fullName>tRNA wybutosine-synthesizing protein 1 homolog</fullName>
    </alternativeName>
    <alternativeName>
        <fullName>tRNA-yW-synthesizing protein</fullName>
    </alternativeName>
</protein>
<reference key="1">
    <citation type="submission" date="2006-02" db="EMBL/GenBank/DDBJ databases">
        <authorList>
            <consortium name="NIH - Xenopus Gene Collection (XGC) project"/>
        </authorList>
    </citation>
    <scope>NUCLEOTIDE SEQUENCE [LARGE SCALE MRNA]</scope>
    <source>
        <tissue>Brain</tissue>
    </source>
</reference>
<evidence type="ECO:0000250" key="1"/>
<evidence type="ECO:0000255" key="2"/>
<evidence type="ECO:0000255" key="3">
    <source>
        <dbReference type="PROSITE-ProRule" id="PRU00088"/>
    </source>
</evidence>
<evidence type="ECO:0000255" key="4">
    <source>
        <dbReference type="PROSITE-ProRule" id="PRU01266"/>
    </source>
</evidence>
<evidence type="ECO:0000256" key="5">
    <source>
        <dbReference type="SAM" id="MobiDB-lite"/>
    </source>
</evidence>
<evidence type="ECO:0000305" key="6"/>
<proteinExistence type="evidence at transcript level"/>
<keyword id="KW-0004">4Fe-4S</keyword>
<keyword id="KW-0408">Iron</keyword>
<keyword id="KW-0411">Iron-sulfur</keyword>
<keyword id="KW-0456">Lyase</keyword>
<keyword id="KW-0479">Metal-binding</keyword>
<keyword id="KW-0547">Nucleotide-binding</keyword>
<keyword id="KW-1185">Reference proteome</keyword>
<keyword id="KW-0949">S-adenosyl-L-methionine</keyword>
<keyword id="KW-0819">tRNA processing</keyword>
<organism>
    <name type="scientific">Xenopus laevis</name>
    <name type="common">African clawed frog</name>
    <dbReference type="NCBI Taxonomy" id="8355"/>
    <lineage>
        <taxon>Eukaryota</taxon>
        <taxon>Metazoa</taxon>
        <taxon>Chordata</taxon>
        <taxon>Craniata</taxon>
        <taxon>Vertebrata</taxon>
        <taxon>Euteleostomi</taxon>
        <taxon>Amphibia</taxon>
        <taxon>Batrachia</taxon>
        <taxon>Anura</taxon>
        <taxon>Pipoidea</taxon>
        <taxon>Pipidae</taxon>
        <taxon>Xenopodinae</taxon>
        <taxon>Xenopus</taxon>
        <taxon>Xenopus</taxon>
    </lineage>
</organism>
<gene>
    <name type="primary">tyw1</name>
    <name type="synonym">rsafd1</name>
</gene>
<dbReference type="EC" id="4.1.3.44"/>
<dbReference type="EMBL" id="BC112954">
    <property type="protein sequence ID" value="AAI12955.1"/>
    <property type="molecule type" value="mRNA"/>
</dbReference>
<dbReference type="RefSeq" id="NP_001089965.1">
    <property type="nucleotide sequence ID" value="NM_001096496.1"/>
</dbReference>
<dbReference type="SMR" id="Q2KHP8"/>
<dbReference type="DNASU" id="735035"/>
<dbReference type="GeneID" id="735035"/>
<dbReference type="KEGG" id="xla:735035"/>
<dbReference type="AGR" id="Xenbase:XB-GENE-5955864"/>
<dbReference type="CTD" id="735035"/>
<dbReference type="Xenbase" id="XB-GENE-5955864">
    <property type="gene designation" value="tyw1.S"/>
</dbReference>
<dbReference type="OrthoDB" id="271553at2759"/>
<dbReference type="UniPathway" id="UPA00375"/>
<dbReference type="Proteomes" id="UP000186698">
    <property type="component" value="Chromosome 2S"/>
</dbReference>
<dbReference type="Bgee" id="735035">
    <property type="expression patterns" value="Expressed in egg cell and 19 other cell types or tissues"/>
</dbReference>
<dbReference type="GO" id="GO:0051539">
    <property type="term" value="F:4 iron, 4 sulfur cluster binding"/>
    <property type="evidence" value="ECO:0007669"/>
    <property type="project" value="UniProtKB-KW"/>
</dbReference>
<dbReference type="GO" id="GO:0010181">
    <property type="term" value="F:FMN binding"/>
    <property type="evidence" value="ECO:0007669"/>
    <property type="project" value="InterPro"/>
</dbReference>
<dbReference type="GO" id="GO:0046872">
    <property type="term" value="F:metal ion binding"/>
    <property type="evidence" value="ECO:0007669"/>
    <property type="project" value="UniProtKB-KW"/>
</dbReference>
<dbReference type="GO" id="GO:0102521">
    <property type="term" value="F:tRNA-4-demethylwyosine synthase activity"/>
    <property type="evidence" value="ECO:0007669"/>
    <property type="project" value="UniProtKB-EC"/>
</dbReference>
<dbReference type="GO" id="GO:0031591">
    <property type="term" value="P:wybutosine biosynthetic process"/>
    <property type="evidence" value="ECO:0000318"/>
    <property type="project" value="GO_Central"/>
</dbReference>
<dbReference type="CDD" id="cd01335">
    <property type="entry name" value="Radical_SAM"/>
    <property type="match status" value="1"/>
</dbReference>
<dbReference type="FunFam" id="3.20.20.70:FF:000196">
    <property type="entry name" value="S-adenosyl-L-methionine-dependent tRNA 4-demethylwyosine synthase"/>
    <property type="match status" value="1"/>
</dbReference>
<dbReference type="Gene3D" id="3.40.50.360">
    <property type="match status" value="1"/>
</dbReference>
<dbReference type="Gene3D" id="3.20.20.70">
    <property type="entry name" value="Aldolase class I"/>
    <property type="match status" value="1"/>
</dbReference>
<dbReference type="InterPro" id="IPR013785">
    <property type="entry name" value="Aldolase_TIM"/>
</dbReference>
<dbReference type="InterPro" id="IPR001094">
    <property type="entry name" value="Flavdoxin-like"/>
</dbReference>
<dbReference type="InterPro" id="IPR008254">
    <property type="entry name" value="Flavodoxin/NO_synth"/>
</dbReference>
<dbReference type="InterPro" id="IPR029039">
    <property type="entry name" value="Flavoprotein-like_sf"/>
</dbReference>
<dbReference type="InterPro" id="IPR007197">
    <property type="entry name" value="rSAM"/>
</dbReference>
<dbReference type="InterPro" id="IPR013917">
    <property type="entry name" value="tRNA_wybutosine-synth"/>
</dbReference>
<dbReference type="InterPro" id="IPR034556">
    <property type="entry name" value="tRNA_wybutosine-synthase"/>
</dbReference>
<dbReference type="PANTHER" id="PTHR13930">
    <property type="entry name" value="S-ADENOSYL-L-METHIONINE-DEPENDENT TRNA 4-DEMETHYLWYOSINE SYNTHASE"/>
    <property type="match status" value="1"/>
</dbReference>
<dbReference type="PANTHER" id="PTHR13930:SF0">
    <property type="entry name" value="S-ADENOSYL-L-METHIONINE-DEPENDENT TRNA 4-DEMETHYLWYOSINE SYNTHASE TYW1-RELATED"/>
    <property type="match status" value="1"/>
</dbReference>
<dbReference type="Pfam" id="PF00258">
    <property type="entry name" value="Flavodoxin_1"/>
    <property type="match status" value="1"/>
</dbReference>
<dbReference type="Pfam" id="PF04055">
    <property type="entry name" value="Radical_SAM"/>
    <property type="match status" value="1"/>
</dbReference>
<dbReference type="Pfam" id="PF08608">
    <property type="entry name" value="Wyosine_form"/>
    <property type="match status" value="1"/>
</dbReference>
<dbReference type="PRINTS" id="PR00369">
    <property type="entry name" value="FLAVODOXIN"/>
</dbReference>
<dbReference type="SFLD" id="SFLDF00284">
    <property type="entry name" value="tRNA_wybutosine-synthesizing"/>
    <property type="match status" value="1"/>
</dbReference>
<dbReference type="SFLD" id="SFLDG01071">
    <property type="entry name" value="tRNA_wybutosine-synthesizing"/>
    <property type="match status" value="1"/>
</dbReference>
<dbReference type="SUPFAM" id="SSF52218">
    <property type="entry name" value="Flavoproteins"/>
    <property type="match status" value="1"/>
</dbReference>
<dbReference type="SUPFAM" id="SSF102114">
    <property type="entry name" value="Radical SAM enzymes"/>
    <property type="match status" value="1"/>
</dbReference>
<dbReference type="PROSITE" id="PS50902">
    <property type="entry name" value="FLAVODOXIN_LIKE"/>
    <property type="match status" value="1"/>
</dbReference>
<dbReference type="PROSITE" id="PS51918">
    <property type="entry name" value="RADICAL_SAM"/>
    <property type="match status" value="1"/>
</dbReference>
<accession>Q2KHP8</accession>
<comment type="function">
    <text evidence="1">Probable component of the wybutosine biosynthesis pathway. Wybutosine is a hyper modified guanosine with a tricyclic base found at the 3'-position adjacent to the anticodon of eukaryotic phenylalanine tRNA. Catalyzes the condensation of N-methylguanine with 2 carbon atoms from pyruvate to form the tricyclic 4-demethylwyosine, an intermediate in wybutosine biosynthesis (By similarity).</text>
</comment>
<comment type="catalytic activity">
    <reaction>
        <text>N(1)-methylguanosine(37) in tRNA(Phe) + pyruvate + S-adenosyl-L-methionine = 4-demethylwyosine(37) in tRNA(Phe) + 5'-deoxyadenosine + L-methionine + CO2 + H2O</text>
        <dbReference type="Rhea" id="RHEA:36347"/>
        <dbReference type="Rhea" id="RHEA-COMP:10164"/>
        <dbReference type="Rhea" id="RHEA-COMP:10165"/>
        <dbReference type="ChEBI" id="CHEBI:15361"/>
        <dbReference type="ChEBI" id="CHEBI:15377"/>
        <dbReference type="ChEBI" id="CHEBI:16526"/>
        <dbReference type="ChEBI" id="CHEBI:17319"/>
        <dbReference type="ChEBI" id="CHEBI:57844"/>
        <dbReference type="ChEBI" id="CHEBI:59789"/>
        <dbReference type="ChEBI" id="CHEBI:64315"/>
        <dbReference type="ChEBI" id="CHEBI:73542"/>
        <dbReference type="EC" id="4.1.3.44"/>
    </reaction>
</comment>
<comment type="cofactor">
    <cofactor evidence="1">
        <name>[4Fe-4S] cluster</name>
        <dbReference type="ChEBI" id="CHEBI:49883"/>
    </cofactor>
    <text evidence="1">Binds 1 [4Fe-4S] cluster. The cluster is coordinated with 3 cysteines and an exchangeable S-adenosyl-L-methionine.</text>
</comment>
<comment type="pathway">
    <text>tRNA modification; wybutosine-tRNA(Phe) biosynthesis.</text>
</comment>
<comment type="similarity">
    <text evidence="6">Belongs to the TYW1 family.</text>
</comment>